<protein>
    <recommendedName>
        <fullName evidence="10">Arabinosyltransferase XEG113</fullName>
        <ecNumber evidence="10">2.4.2.-</ecNumber>
    </recommendedName>
    <alternativeName>
        <fullName evidence="9">Protein LATERAL ROOT DEVELOPMENT 5</fullName>
    </alternativeName>
    <alternativeName>
        <fullName evidence="8">Xyloglucanase 113</fullName>
    </alternativeName>
</protein>
<dbReference type="EC" id="2.4.2.-" evidence="10"/>
<dbReference type="EMBL" id="KJ138873">
    <property type="protein sequence ID" value="AHL38813.1"/>
    <property type="molecule type" value="mRNA"/>
</dbReference>
<dbReference type="EMBL" id="AC006068">
    <property type="protein sequence ID" value="AAD15452.2"/>
    <property type="status" value="ALT_SEQ"/>
    <property type="molecule type" value="Genomic_DNA"/>
</dbReference>
<dbReference type="EMBL" id="CP002685">
    <property type="protein sequence ID" value="AEC09128.1"/>
    <property type="molecule type" value="Genomic_DNA"/>
</dbReference>
<dbReference type="EMBL" id="AY074327">
    <property type="protein sequence ID" value="AAL67023.1"/>
    <property type="molecule type" value="mRNA"/>
</dbReference>
<dbReference type="EMBL" id="AK316893">
    <property type="protein sequence ID" value="BAH19600.1"/>
    <property type="molecule type" value="mRNA"/>
</dbReference>
<dbReference type="PIR" id="G84770">
    <property type="entry name" value="G84770"/>
</dbReference>
<dbReference type="RefSeq" id="NP_850250.1">
    <property type="nucleotide sequence ID" value="NM_179919.2"/>
</dbReference>
<dbReference type="FunCoup" id="Q8VXZ5">
    <property type="interactions" value="844"/>
</dbReference>
<dbReference type="STRING" id="3702.Q8VXZ5"/>
<dbReference type="CAZy" id="GT77">
    <property type="family name" value="Glycosyltransferase Family 77"/>
</dbReference>
<dbReference type="GlyCosmos" id="Q8VXZ5">
    <property type="glycosylation" value="4 sites, No reported glycans"/>
</dbReference>
<dbReference type="GlyGen" id="Q8VXZ5">
    <property type="glycosylation" value="4 sites"/>
</dbReference>
<dbReference type="PaxDb" id="3702-AT2G35610.1"/>
<dbReference type="ProteomicsDB" id="242509"/>
<dbReference type="EnsemblPlants" id="AT2G35610.1">
    <property type="protein sequence ID" value="AT2G35610.1"/>
    <property type="gene ID" value="AT2G35610"/>
</dbReference>
<dbReference type="GeneID" id="818128"/>
<dbReference type="Gramene" id="AT2G35610.1">
    <property type="protein sequence ID" value="AT2G35610.1"/>
    <property type="gene ID" value="AT2G35610"/>
</dbReference>
<dbReference type="KEGG" id="ath:AT2G35610"/>
<dbReference type="Araport" id="AT2G35610"/>
<dbReference type="TAIR" id="AT2G35610">
    <property type="gene designation" value="XEG113"/>
</dbReference>
<dbReference type="eggNOG" id="ENOG502QSJ9">
    <property type="taxonomic scope" value="Eukaryota"/>
</dbReference>
<dbReference type="HOGENOM" id="CLU_024474_0_0_1"/>
<dbReference type="InParanoid" id="Q8VXZ5"/>
<dbReference type="OMA" id="IQFSTMQ"/>
<dbReference type="PhylomeDB" id="Q8VXZ5"/>
<dbReference type="PRO" id="PR:Q8VXZ5"/>
<dbReference type="Proteomes" id="UP000006548">
    <property type="component" value="Chromosome 2"/>
</dbReference>
<dbReference type="ExpressionAtlas" id="Q8VXZ5">
    <property type="expression patterns" value="baseline and differential"/>
</dbReference>
<dbReference type="GO" id="GO:0005768">
    <property type="term" value="C:endosome"/>
    <property type="evidence" value="ECO:0007005"/>
    <property type="project" value="TAIR"/>
</dbReference>
<dbReference type="GO" id="GO:0005794">
    <property type="term" value="C:Golgi apparatus"/>
    <property type="evidence" value="ECO:0007005"/>
    <property type="project" value="TAIR"/>
</dbReference>
<dbReference type="GO" id="GO:0000139">
    <property type="term" value="C:Golgi membrane"/>
    <property type="evidence" value="ECO:0007669"/>
    <property type="project" value="UniProtKB-SubCell"/>
</dbReference>
<dbReference type="GO" id="GO:0000138">
    <property type="term" value="C:Golgi trans cisterna"/>
    <property type="evidence" value="ECO:0007005"/>
    <property type="project" value="TAIR"/>
</dbReference>
<dbReference type="GO" id="GO:0005802">
    <property type="term" value="C:trans-Golgi network"/>
    <property type="evidence" value="ECO:0007005"/>
    <property type="project" value="TAIR"/>
</dbReference>
<dbReference type="GO" id="GO:0052636">
    <property type="term" value="F:arabinosyltransferase activity"/>
    <property type="evidence" value="ECO:0000315"/>
    <property type="project" value="TAIR"/>
</dbReference>
<dbReference type="GO" id="GO:0052325">
    <property type="term" value="P:cell wall pectin biosynthetic process"/>
    <property type="evidence" value="ECO:0000315"/>
    <property type="project" value="TAIR"/>
</dbReference>
<dbReference type="GO" id="GO:0006486">
    <property type="term" value="P:protein glycosylation"/>
    <property type="evidence" value="ECO:0000315"/>
    <property type="project" value="TAIR"/>
</dbReference>
<dbReference type="GO" id="GO:0080147">
    <property type="term" value="P:root hair cell development"/>
    <property type="evidence" value="ECO:0000315"/>
    <property type="project" value="TAIR"/>
</dbReference>
<dbReference type="InterPro" id="IPR053250">
    <property type="entry name" value="Glycosyltransferase_77"/>
</dbReference>
<dbReference type="InterPro" id="IPR005069">
    <property type="entry name" value="Nucl-diP-sugar_transferase"/>
</dbReference>
<dbReference type="PANTHER" id="PTHR46936">
    <property type="entry name" value="ARABINOSYLTRANSFERASE XEG113"/>
    <property type="match status" value="1"/>
</dbReference>
<dbReference type="PANTHER" id="PTHR46936:SF1">
    <property type="entry name" value="ARABINOSYLTRANSFERASE XEG113"/>
    <property type="match status" value="1"/>
</dbReference>
<dbReference type="Pfam" id="PF03407">
    <property type="entry name" value="Nucleotid_trans"/>
    <property type="match status" value="1"/>
</dbReference>
<proteinExistence type="evidence at transcript level"/>
<evidence type="ECO:0000250" key="1">
    <source>
        <dbReference type="UniProtKB" id="Q9JI93"/>
    </source>
</evidence>
<evidence type="ECO:0000255" key="2"/>
<evidence type="ECO:0000255" key="3">
    <source>
        <dbReference type="PROSITE-ProRule" id="PRU00498"/>
    </source>
</evidence>
<evidence type="ECO:0000269" key="4">
    <source>
    </source>
</evidence>
<evidence type="ECO:0000269" key="5">
    <source>
    </source>
</evidence>
<evidence type="ECO:0000269" key="6">
    <source>
    </source>
</evidence>
<evidence type="ECO:0000269" key="7">
    <source>
    </source>
</evidence>
<evidence type="ECO:0000303" key="8">
    <source>
    </source>
</evidence>
<evidence type="ECO:0000303" key="9">
    <source>
    </source>
</evidence>
<evidence type="ECO:0000305" key="10"/>
<evidence type="ECO:0000305" key="11">
    <source>
    </source>
</evidence>
<evidence type="ECO:0000312" key="12">
    <source>
        <dbReference type="Araport" id="AT2G35610"/>
    </source>
</evidence>
<name>XG113_ARATH</name>
<feature type="chain" id="PRO_0000434540" description="Arabinosyltransferase XEG113">
    <location>
        <begin position="1"/>
        <end position="644"/>
    </location>
</feature>
<feature type="topological domain" description="Cytoplasmic" evidence="10">
    <location>
        <begin position="1"/>
        <end position="17"/>
    </location>
</feature>
<feature type="transmembrane region" description="Helical; Signal-anchor for type II membrane protein" evidence="2">
    <location>
        <begin position="18"/>
        <end position="38"/>
    </location>
</feature>
<feature type="topological domain" description="Lumenal" evidence="10">
    <location>
        <begin position="39"/>
        <end position="644"/>
    </location>
</feature>
<feature type="short sequence motif" description="DXD motif" evidence="10">
    <location>
        <begin position="226"/>
        <end position="228"/>
    </location>
</feature>
<feature type="glycosylation site" description="N-linked (GlcNAc...) asparagine" evidence="3">
    <location>
        <position position="46"/>
    </location>
</feature>
<feature type="glycosylation site" description="N-linked (GlcNAc...) asparagine" evidence="3">
    <location>
        <position position="70"/>
    </location>
</feature>
<feature type="glycosylation site" description="N-linked (GlcNAc...) asparagine" evidence="3">
    <location>
        <position position="446"/>
    </location>
</feature>
<feature type="glycosylation site" description="N-linked (GlcNAc...) asparagine" evidence="3">
    <location>
        <position position="542"/>
    </location>
</feature>
<feature type="sequence conflict" description="In Ref. 5; BAH19600." evidence="10" ref="5">
    <original>M</original>
    <variation>V</variation>
    <location>
        <position position="167"/>
    </location>
</feature>
<feature type="sequence conflict" description="In Ref. 5; BAH19600." evidence="10" ref="5">
    <original>D</original>
    <variation>E</variation>
    <location>
        <position position="620"/>
    </location>
</feature>
<sequence>MVEGWRNGFRDATNSKPLFVTIYATVIIGVLVSSFYVFSAIYSPTNGSSSFLSFPPLSTSGRIHSLPQENATLELPVAPPPPPQALPPPVLEEAQGNSLGKIWVSPPRDKKMPPLETFKLTKELFGERVKDNVIIVTFGNYAFMDFILTWVKHLTDLDLSNILVGAMDTKLLEALYWKGVPVFDMGSHMSTVDVGWGSPTFHKMGREKVILIDSVLPFGYELLMCDTDMVWLKNPMPYLARFPDADVLTSSDQVVPTVIDDSLDIWQQVGAAYNIGIFHWRPTESAKKLAKEWKEILLADDKVWDQNGFNEIVRRQLGPSVEGDSGLFYAYDGNLKVGILPASIFCSGHTYFVQAMYQQLRLEPYAVHTTFQYAGTEGKRHRLREGMVFYDPPEYYDSPGGFIAFKPSIPKSLLLDGKHTIESHFILVNHQMKQIRSALAIASLLNRTLVMPPIWCRLDRLWFGHPGTLQGSMTRQPFICPLDHVFEVNIMLKELPEEEFGPGIGIREYSFLDNPLLPKQVKESWLDVQLCQEGKEGCEASNNTSPSRVLKFPKRSNEDTFKAIFSSFDDVKVIKFSSIEDAFIGFSDKEREERFRRRVKRYVGIWCCEENKTPGHIYYDMYWDEKPGWKPVPPQTPEEDHPPL</sequence>
<accession>Q8VXZ5</accession>
<accession>B9DFT3</accession>
<accession>Q9ZQN4</accession>
<comment type="function">
    <text evidence="4 5 6 7">Plays a role in the arabinosylation of cell wall components. Involved in the arabinosylation of extensin proteins in root hair cells (PubMed:19667208, PubMed:21680836). Extensins are structural glycoproteins present in cell walls and its arabinosylation is important for cell elongation, root hair cell development, lateral root development and root hair tip growth (PubMed:19667208, PubMed:21680836, PubMed:24619997, PubMed:25944827).</text>
</comment>
<comment type="subcellular location">
    <subcellularLocation>
        <location evidence="5">Golgi apparatus membrane</location>
        <topology evidence="11">Single-pass type II membrane protein</topology>
    </subcellularLocation>
</comment>
<comment type="domain">
    <text evidence="1">The conserved DXD motif is involved in enzyme activity.</text>
</comment>
<comment type="disruption phenotype">
    <text evidence="4 5 6">Increased elongation of hypocotyls (PubMed:19667208). Reduced root hair length (PubMed:21680836). Reduced content of arabinosylated extensins in cell walls (PubMed:19667208, PubMed:21680836). Increased lateral root formation (PubMed:24619997).</text>
</comment>
<comment type="similarity">
    <text evidence="10">Belongs to the glycosyltransferase 77 family.</text>
</comment>
<comment type="sequence caution" evidence="10">
    <conflict type="erroneous gene model prediction">
        <sequence resource="EMBL-CDS" id="AAD15452"/>
    </conflict>
</comment>
<organism>
    <name type="scientific">Arabidopsis thaliana</name>
    <name type="common">Mouse-ear cress</name>
    <dbReference type="NCBI Taxonomy" id="3702"/>
    <lineage>
        <taxon>Eukaryota</taxon>
        <taxon>Viridiplantae</taxon>
        <taxon>Streptophyta</taxon>
        <taxon>Embryophyta</taxon>
        <taxon>Tracheophyta</taxon>
        <taxon>Spermatophyta</taxon>
        <taxon>Magnoliopsida</taxon>
        <taxon>eudicotyledons</taxon>
        <taxon>Gunneridae</taxon>
        <taxon>Pentapetalae</taxon>
        <taxon>rosids</taxon>
        <taxon>malvids</taxon>
        <taxon>Brassicales</taxon>
        <taxon>Brassicaceae</taxon>
        <taxon>Camelineae</taxon>
        <taxon>Arabidopsis</taxon>
    </lineage>
</organism>
<keyword id="KW-0961">Cell wall biogenesis/degradation</keyword>
<keyword id="KW-0325">Glycoprotein</keyword>
<keyword id="KW-0328">Glycosyltransferase</keyword>
<keyword id="KW-0333">Golgi apparatus</keyword>
<keyword id="KW-0472">Membrane</keyword>
<keyword id="KW-1185">Reference proteome</keyword>
<keyword id="KW-0735">Signal-anchor</keyword>
<keyword id="KW-0808">Transferase</keyword>
<keyword id="KW-0812">Transmembrane</keyword>
<keyword id="KW-1133">Transmembrane helix</keyword>
<gene>
    <name evidence="8" type="primary">XEG113</name>
    <name evidence="9" type="synonym">LRD5</name>
    <name evidence="12" type="ordered locus">At2g35610</name>
</gene>
<reference key="1">
    <citation type="journal article" date="2014" name="Plant J.">
        <title>The plant glycosyltransferase clone collection for functional genomics.</title>
        <authorList>
            <person name="Lao J."/>
            <person name="Oikawa A."/>
            <person name="Bromley J.R."/>
            <person name="McInerney P."/>
            <person name="Suttangkakul A."/>
            <person name="Smith-Moritz A.M."/>
            <person name="Plahar H."/>
            <person name="Chiu T.-Y."/>
            <person name="Gonzalez Fernandez-Nino S.M.G."/>
            <person name="Ebert B."/>
            <person name="Yang F."/>
            <person name="Christiansen K.M."/>
            <person name="Hansen S.F."/>
            <person name="Stonebloom S."/>
            <person name="Adams P.D."/>
            <person name="Ronald P.C."/>
            <person name="Hillson N.J."/>
            <person name="Hadi M.Z."/>
            <person name="Vega-Sanchez M.E."/>
            <person name="Loque D."/>
            <person name="Scheller H.V."/>
            <person name="Heazlewood J.L."/>
        </authorList>
    </citation>
    <scope>NUCLEOTIDE SEQUENCE [MRNA]</scope>
    <source>
        <strain>cv. Columbia</strain>
    </source>
</reference>
<reference key="2">
    <citation type="journal article" date="1999" name="Nature">
        <title>Sequence and analysis of chromosome 2 of the plant Arabidopsis thaliana.</title>
        <authorList>
            <person name="Lin X."/>
            <person name="Kaul S."/>
            <person name="Rounsley S.D."/>
            <person name="Shea T.P."/>
            <person name="Benito M.-I."/>
            <person name="Town C.D."/>
            <person name="Fujii C.Y."/>
            <person name="Mason T.M."/>
            <person name="Bowman C.L."/>
            <person name="Barnstead M.E."/>
            <person name="Feldblyum T.V."/>
            <person name="Buell C.R."/>
            <person name="Ketchum K.A."/>
            <person name="Lee J.J."/>
            <person name="Ronning C.M."/>
            <person name="Koo H.L."/>
            <person name="Moffat K.S."/>
            <person name="Cronin L.A."/>
            <person name="Shen M."/>
            <person name="Pai G."/>
            <person name="Van Aken S."/>
            <person name="Umayam L."/>
            <person name="Tallon L.J."/>
            <person name="Gill J.E."/>
            <person name="Adams M.D."/>
            <person name="Carrera A.J."/>
            <person name="Creasy T.H."/>
            <person name="Goodman H.M."/>
            <person name="Somerville C.R."/>
            <person name="Copenhaver G.P."/>
            <person name="Preuss D."/>
            <person name="Nierman W.C."/>
            <person name="White O."/>
            <person name="Eisen J.A."/>
            <person name="Salzberg S.L."/>
            <person name="Fraser C.M."/>
            <person name="Venter J.C."/>
        </authorList>
    </citation>
    <scope>NUCLEOTIDE SEQUENCE [LARGE SCALE GENOMIC DNA]</scope>
    <source>
        <strain>cv. Columbia</strain>
    </source>
</reference>
<reference key="3">
    <citation type="journal article" date="2017" name="Plant J.">
        <title>Araport11: a complete reannotation of the Arabidopsis thaliana reference genome.</title>
        <authorList>
            <person name="Cheng C.Y."/>
            <person name="Krishnakumar V."/>
            <person name="Chan A.P."/>
            <person name="Thibaud-Nissen F."/>
            <person name="Schobel S."/>
            <person name="Town C.D."/>
        </authorList>
    </citation>
    <scope>GENOME REANNOTATION</scope>
    <source>
        <strain>cv. Columbia</strain>
    </source>
</reference>
<reference key="4">
    <citation type="journal article" date="2003" name="Science">
        <title>Empirical analysis of transcriptional activity in the Arabidopsis genome.</title>
        <authorList>
            <person name="Yamada K."/>
            <person name="Lim J."/>
            <person name="Dale J.M."/>
            <person name="Chen H."/>
            <person name="Shinn P."/>
            <person name="Palm C.J."/>
            <person name="Southwick A.M."/>
            <person name="Wu H.C."/>
            <person name="Kim C.J."/>
            <person name="Nguyen M."/>
            <person name="Pham P.K."/>
            <person name="Cheuk R.F."/>
            <person name="Karlin-Newmann G."/>
            <person name="Liu S.X."/>
            <person name="Lam B."/>
            <person name="Sakano H."/>
            <person name="Wu T."/>
            <person name="Yu G."/>
            <person name="Miranda M."/>
            <person name="Quach H.L."/>
            <person name="Tripp M."/>
            <person name="Chang C.H."/>
            <person name="Lee J.M."/>
            <person name="Toriumi M.J."/>
            <person name="Chan M.M."/>
            <person name="Tang C.C."/>
            <person name="Onodera C.S."/>
            <person name="Deng J.M."/>
            <person name="Akiyama K."/>
            <person name="Ansari Y."/>
            <person name="Arakawa T."/>
            <person name="Banh J."/>
            <person name="Banno F."/>
            <person name="Bowser L."/>
            <person name="Brooks S.Y."/>
            <person name="Carninci P."/>
            <person name="Chao Q."/>
            <person name="Choy N."/>
            <person name="Enju A."/>
            <person name="Goldsmith A.D."/>
            <person name="Gurjal M."/>
            <person name="Hansen N.F."/>
            <person name="Hayashizaki Y."/>
            <person name="Johnson-Hopson C."/>
            <person name="Hsuan V.W."/>
            <person name="Iida K."/>
            <person name="Karnes M."/>
            <person name="Khan S."/>
            <person name="Koesema E."/>
            <person name="Ishida J."/>
            <person name="Jiang P.X."/>
            <person name="Jones T."/>
            <person name="Kawai J."/>
            <person name="Kamiya A."/>
            <person name="Meyers C."/>
            <person name="Nakajima M."/>
            <person name="Narusaka M."/>
            <person name="Seki M."/>
            <person name="Sakurai T."/>
            <person name="Satou M."/>
            <person name="Tamse R."/>
            <person name="Vaysberg M."/>
            <person name="Wallender E.K."/>
            <person name="Wong C."/>
            <person name="Yamamura Y."/>
            <person name="Yuan S."/>
            <person name="Shinozaki K."/>
            <person name="Davis R.W."/>
            <person name="Theologis A."/>
            <person name="Ecker J.R."/>
        </authorList>
    </citation>
    <scope>NUCLEOTIDE SEQUENCE [LARGE SCALE MRNA]</scope>
    <source>
        <strain>cv. Columbia</strain>
    </source>
</reference>
<reference key="5">
    <citation type="journal article" date="2009" name="DNA Res.">
        <title>Analysis of multiple occurrences of alternative splicing events in Arabidopsis thaliana using novel sequenced full-length cDNAs.</title>
        <authorList>
            <person name="Iida K."/>
            <person name="Fukami-Kobayashi K."/>
            <person name="Toyoda A."/>
            <person name="Sakaki Y."/>
            <person name="Kobayashi M."/>
            <person name="Seki M."/>
            <person name="Shinozaki K."/>
        </authorList>
    </citation>
    <scope>NUCLEOTIDE SEQUENCE [LARGE SCALE MRNA]</scope>
    <source>
        <strain>cv. Columbia</strain>
    </source>
</reference>
<reference key="6">
    <citation type="journal article" date="2009" name="Proc. Natl. Acad. Sci. U.S.A.">
        <title>Identification of plant cell wall mutants by means of a forward chemical genetic approach using hydrolases.</title>
        <authorList>
            <person name="Gille S."/>
            <person name="Haensel U."/>
            <person name="Ziemann M."/>
            <person name="Pauly M."/>
        </authorList>
    </citation>
    <scope>FUNCTION</scope>
    <scope>DISRUPTION PHENOTYPE</scope>
    <source>
        <strain>cv. Columbia</strain>
    </source>
</reference>
<reference key="7">
    <citation type="journal article" date="2011" name="Science">
        <title>O-glycosylated cell wall proteins are essential in root hair growth.</title>
        <authorList>
            <person name="Velasquez S.M."/>
            <person name="Ricardi M.M."/>
            <person name="Dorosz J.G."/>
            <person name="Fernandez P.V."/>
            <person name="Nadra A.D."/>
            <person name="Pol-Fachin L."/>
            <person name="Egelund J."/>
            <person name="Gille S."/>
            <person name="Harholt J."/>
            <person name="Ciancia M."/>
            <person name="Verli H."/>
            <person name="Pauly M."/>
            <person name="Bacic A."/>
            <person name="Olsen C.E."/>
            <person name="Ulvskov P."/>
            <person name="Petersen B.L."/>
            <person name="Somerville C."/>
            <person name="Iusem N.D."/>
            <person name="Estevez J.M."/>
        </authorList>
    </citation>
    <scope>FUNCTION</scope>
    <scope>SUBCELLULAR LOCATION</scope>
    <scope>DISRUPTION PHENOTYPE</scope>
    <source>
        <strain>cv. Columbia</strain>
    </source>
</reference>
<reference key="8">
    <citation type="journal article" date="2014" name="J. Exp. Bot.">
        <title>Cell wall properties play an important role in the emergence of lateral root primordia from the parent root.</title>
        <authorList>
            <person name="Roycewicz P.S."/>
            <person name="Malamy J.E."/>
        </authorList>
    </citation>
    <scope>FUNCTION</scope>
    <scope>DISRUPTION PHENOTYPE</scope>
    <source>
        <strain>cv. Wassilewskija</strain>
    </source>
</reference>
<reference key="9">
    <citation type="journal article" date="2015" name="Plant Physiol.">
        <title>Low sugar is not always good: impact of specific o-glycan defects on tip growth in Arabidopsis.</title>
        <authorList>
            <person name="Velasquez S.M."/>
            <person name="Marzol E."/>
            <person name="Borassi C."/>
            <person name="Pol-Fachin L."/>
            <person name="Ricardi M.M."/>
            <person name="Mangano S."/>
            <person name="Juarez S.P."/>
            <person name="Salter J.D."/>
            <person name="Dorosz J.G."/>
            <person name="Marcus S.E."/>
            <person name="Knox J.P."/>
            <person name="Dinneny J.R."/>
            <person name="Iusem N.D."/>
            <person name="Verli H."/>
            <person name="Estevez J.M."/>
        </authorList>
    </citation>
    <scope>FUNCTION</scope>
    <source>
        <strain>cv. Columbia</strain>
    </source>
</reference>